<proteinExistence type="evidence at protein level"/>
<organism>
    <name type="scientific">Homo sapiens</name>
    <name type="common">Human</name>
    <dbReference type="NCBI Taxonomy" id="9606"/>
    <lineage>
        <taxon>Eukaryota</taxon>
        <taxon>Metazoa</taxon>
        <taxon>Chordata</taxon>
        <taxon>Craniata</taxon>
        <taxon>Vertebrata</taxon>
        <taxon>Euteleostomi</taxon>
        <taxon>Mammalia</taxon>
        <taxon>Eutheria</taxon>
        <taxon>Euarchontoglires</taxon>
        <taxon>Primates</taxon>
        <taxon>Haplorrhini</taxon>
        <taxon>Catarrhini</taxon>
        <taxon>Hominidae</taxon>
        <taxon>Homo</taxon>
    </lineage>
</organism>
<gene>
    <name evidence="27 30" type="primary">GPI</name>
</gene>
<sequence length="558" mass="63147">MAALTRDPQFQKLQQWYREHRSELNLRRLFDANKDRFNHFSLTLNTNHGHILVDYSKNLVTEDVMRMLVDLAKSRGVEAARERMFNGEKINYTEGRAVLHVALRNRSNTPILVDGKDVMPEVNKVLDKMKSFCQRVRSGDWKGYTGKTITDVINIGIGGSDLGPLMVTEALKPYSSGGPRVWYVSNIDGTHIAKTLAQLNPESSLFIIASKTFTTQETITNAETAKEWFLQAAKDPSAVAKHFVALSTNTTKVKEFGIDPQNMFEFWDWVGGRYSLWSAIGLSIALHVGFDNFEQLLSGAHWMDQHFRTTPLEKNAPVLLALLGIWYINCFGCETHAMLPYDQYLHRFAAYFQQGDMESNGKYITKSGTRVDHQTGPIVWGEPGTNGQHAFYQLIHQGTKMIPCDFLIPVQTQHPIRKGLHHKILLANFLAQTEALMRGKSTEEARKELQAAGKSPEDLERLLPHKVFEGNRPTNSIVFTKLTPFMLGALVAMYEHKIFVQGIIWDINSFDQWGVELGKQLAKKIEPELDGSAQVTSHDASTNGLINFIKQQREARVQ</sequence>
<comment type="function">
    <text evidence="3 5 12 14">In the cytoplasm, catalyzes the conversion of glucose-6-phosphate to fructose-6-phosphate, the second step in glycolysis, and the reverse reaction during gluconeogenesis (PubMed:28803808). Besides it's role as a glycolytic enzyme, also acts as a secreted cytokine: acts as an angiogenic factor (AMF) that stimulates endothelial cell motility (PubMed:11437381). Acts as a neurotrophic factor, neuroleukin, for spinal and sensory neurons (PubMed:11004567, PubMed:3352745). It is secreted by lectin-stimulated T-cells and induces immunoglobulin secretion (PubMed:11004567, PubMed:3352745).</text>
</comment>
<comment type="catalytic activity">
    <reaction evidence="12">
        <text>alpha-D-glucose 6-phosphate = beta-D-fructose 6-phosphate</text>
        <dbReference type="Rhea" id="RHEA:11816"/>
        <dbReference type="ChEBI" id="CHEBI:57634"/>
        <dbReference type="ChEBI" id="CHEBI:58225"/>
        <dbReference type="EC" id="5.3.1.9"/>
    </reaction>
</comment>
<comment type="activity regulation">
    <text evidence="6">Strongly inhibited by erythrose 4-phosphate.</text>
</comment>
<comment type="pathway">
    <text evidence="12">Carbohydrate degradation; glycolysis; D-glyceraldehyde 3-phosphate and glycerone phosphate from D-glucose: step 2/4.</text>
</comment>
<comment type="subunit">
    <text evidence="4 6 8">Homodimer; in the catalytically active form (PubMed:11371164, PubMed:12054796, PubMed:12777791). Monomer in the secreted form (PubMed:11371164, PubMed:12054796, PubMed:12777791).</text>
</comment>
<comment type="interaction">
    <interactant intactId="EBI-2558394">
        <id>P06744</id>
    </interactant>
    <interactant intactId="EBI-13943422">
        <id>Q96BW9</id>
        <label>TAMM41</label>
    </interactant>
    <organismsDiffer>false</organismsDiffer>
    <experiments>3</experiments>
</comment>
<comment type="subcellular location">
    <subcellularLocation>
        <location evidence="5">Cytoplasm</location>
    </subcellularLocation>
    <subcellularLocation>
        <location evidence="5">Secreted</location>
    </subcellularLocation>
</comment>
<comment type="alternative products">
    <event type="alternative splicing"/>
    <isoform>
        <id>P06744-1</id>
        <name>1</name>
        <sequence type="displayed"/>
    </isoform>
    <isoform>
        <id>P06744-2</id>
        <name>2</name>
        <sequence type="described" ref="VSP_043475 VSP_043476"/>
    </isoform>
</comment>
<comment type="PTM">
    <text evidence="3 9">Phosphorylation at Ser-185 by CK2 has been shown to decrease enzymatic activity and may contribute to secretion by a non-classical secretory pathway.</text>
</comment>
<comment type="PTM">
    <text evidence="10">ISGylated.</text>
</comment>
<comment type="disease" evidence="12 15 16 17 18 19 20">
    <disease id="DI-01729">
        <name>Anemia, congenital, non-spherocytic hemolytic, 4</name>
        <acronym>CNSHA4</acronym>
        <description>An autosomal recessive form of anemia in which there is no abnormal hemoglobin or spherocytosis. It is caused by glucose phosphate isomerase deficiency.</description>
        <dbReference type="MIM" id="613470"/>
    </disease>
    <text>The disease is caused by variants affecting the gene represented in this entry.</text>
</comment>
<comment type="similarity">
    <text evidence="29">Belongs to the GPI family.</text>
</comment>
<comment type="online information" name="Wikipedia">
    <link uri="https://en.wikipedia.org/wiki/Phosphoglucose_isomerase"/>
    <text>Phosphoglucose isomerase entry</text>
</comment>
<dbReference type="EC" id="5.3.1.9" evidence="12"/>
<dbReference type="EMBL" id="K03515">
    <property type="protein sequence ID" value="AAA36368.1"/>
    <property type="molecule type" value="mRNA"/>
</dbReference>
<dbReference type="EMBL" id="AF187554">
    <property type="protein sequence ID" value="AAF22645.1"/>
    <property type="molecule type" value="mRNA"/>
</dbReference>
<dbReference type="EMBL" id="AY324386">
    <property type="protein sequence ID" value="AAP72966.1"/>
    <property type="molecule type" value="Genomic_DNA"/>
</dbReference>
<dbReference type="EMBL" id="AK294396">
    <property type="protein sequence ID" value="BAG57650.1"/>
    <property type="molecule type" value="mRNA"/>
</dbReference>
<dbReference type="EMBL" id="AC010504">
    <property type="status" value="NOT_ANNOTATED_CDS"/>
    <property type="molecule type" value="Genomic_DNA"/>
</dbReference>
<dbReference type="EMBL" id="AC092073">
    <property type="status" value="NOT_ANNOTATED_CDS"/>
    <property type="molecule type" value="Genomic_DNA"/>
</dbReference>
<dbReference type="EMBL" id="BC004982">
    <property type="protein sequence ID" value="AAH04982.1"/>
    <property type="molecule type" value="mRNA"/>
</dbReference>
<dbReference type="EMBL" id="AH002710">
    <property type="protein sequence ID" value="AAA52593.1"/>
    <property type="molecule type" value="Genomic_DNA"/>
</dbReference>
<dbReference type="CCDS" id="CCDS12437.1">
    <molecule id="P06744-1"/>
</dbReference>
<dbReference type="CCDS" id="CCDS54246.1">
    <molecule id="P06744-2"/>
</dbReference>
<dbReference type="PIR" id="A35333">
    <property type="entry name" value="A35333"/>
</dbReference>
<dbReference type="RefSeq" id="NP_000166.2">
    <molecule id="P06744-1"/>
    <property type="nucleotide sequence ID" value="NM_000175.4"/>
</dbReference>
<dbReference type="RefSeq" id="NP_001171651.1">
    <molecule id="P06744-2"/>
    <property type="nucleotide sequence ID" value="NM_001184722.1"/>
</dbReference>
<dbReference type="RefSeq" id="NP_001316838.1">
    <molecule id="P06744-1"/>
    <property type="nucleotide sequence ID" value="NM_001329909.1"/>
</dbReference>
<dbReference type="RefSeq" id="NP_001316839.1">
    <molecule id="P06744-1"/>
    <property type="nucleotide sequence ID" value="NM_001329910.1"/>
</dbReference>
<dbReference type="RefSeq" id="NP_001316840.1">
    <property type="nucleotide sequence ID" value="NM_001329911.1"/>
</dbReference>
<dbReference type="PDB" id="1IAT">
    <property type="method" value="X-ray"/>
    <property type="resolution" value="1.62 A"/>
    <property type="chains" value="A=2-558"/>
</dbReference>
<dbReference type="PDB" id="1IRI">
    <property type="method" value="X-ray"/>
    <property type="resolution" value="2.40 A"/>
    <property type="chains" value="A/B/C/D=1-558"/>
</dbReference>
<dbReference type="PDB" id="1JIQ">
    <property type="method" value="X-ray"/>
    <property type="resolution" value="1.90 A"/>
    <property type="chains" value="A/B/C/D=1-558"/>
</dbReference>
<dbReference type="PDB" id="1JLH">
    <property type="method" value="X-ray"/>
    <property type="resolution" value="2.10 A"/>
    <property type="chains" value="A/B/C/D=1-558"/>
</dbReference>
<dbReference type="PDB" id="1NUH">
    <property type="method" value="X-ray"/>
    <property type="resolution" value="2.51 A"/>
    <property type="chains" value="A=1-558"/>
</dbReference>
<dbReference type="PDB" id="6XUH">
    <property type="method" value="X-ray"/>
    <property type="resolution" value="2.38 A"/>
    <property type="chains" value="A/B/C/D=2-557"/>
</dbReference>
<dbReference type="PDB" id="6XUI">
    <property type="method" value="X-ray"/>
    <property type="resolution" value="1.95 A"/>
    <property type="chains" value="A/B/C/D=2-557"/>
</dbReference>
<dbReference type="PDB" id="8BBH">
    <property type="method" value="X-ray"/>
    <property type="resolution" value="1.62 A"/>
    <property type="chains" value="A=293-307"/>
</dbReference>
<dbReference type="PDB" id="8P2K">
    <property type="method" value="EM"/>
    <property type="resolution" value="2.90 A"/>
    <property type="chains" value="BK=1-60"/>
</dbReference>
<dbReference type="PDB" id="9FCW">
    <property type="method" value="X-ray"/>
    <property type="resolution" value="1.40 A"/>
    <property type="chains" value="A/B/C/D=1-558"/>
</dbReference>
<dbReference type="PDB" id="9FHF">
    <property type="method" value="X-ray"/>
    <property type="resolution" value="1.80 A"/>
    <property type="chains" value="A/B/C/D=1-558"/>
</dbReference>
<dbReference type="PDB" id="9FKC">
    <property type="method" value="X-ray"/>
    <property type="resolution" value="1.60 A"/>
    <property type="chains" value="A/B/C/D=1-558"/>
</dbReference>
<dbReference type="PDB" id="9FKF">
    <property type="method" value="X-ray"/>
    <property type="resolution" value="1.60 A"/>
    <property type="chains" value="A/B/C/D=1-558"/>
</dbReference>
<dbReference type="PDBsum" id="1IAT"/>
<dbReference type="PDBsum" id="1IRI"/>
<dbReference type="PDBsum" id="1JIQ"/>
<dbReference type="PDBsum" id="1JLH"/>
<dbReference type="PDBsum" id="1NUH"/>
<dbReference type="PDBsum" id="6XUH"/>
<dbReference type="PDBsum" id="6XUI"/>
<dbReference type="PDBsum" id="8BBH"/>
<dbReference type="PDBsum" id="8P2K"/>
<dbReference type="PDBsum" id="9FCW"/>
<dbReference type="PDBsum" id="9FHF"/>
<dbReference type="PDBsum" id="9FKC"/>
<dbReference type="PDBsum" id="9FKF"/>
<dbReference type="EMDB" id="EMD-17367"/>
<dbReference type="SMR" id="P06744"/>
<dbReference type="BioGRID" id="109082">
    <property type="interactions" value="227"/>
</dbReference>
<dbReference type="FunCoup" id="P06744">
    <property type="interactions" value="1579"/>
</dbReference>
<dbReference type="IntAct" id="P06744">
    <property type="interactions" value="39"/>
</dbReference>
<dbReference type="MINT" id="P06744"/>
<dbReference type="STRING" id="9606.ENSP00000405573"/>
<dbReference type="ChEMBL" id="CHEMBL4295702"/>
<dbReference type="DrugBank" id="DB02093">
    <property type="generic name" value="5-phospho-D-arabinohydroxamic acid"/>
</dbReference>
<dbReference type="DrugBank" id="DB03042">
    <property type="generic name" value="5-Phosphoarabinonic Acid"/>
</dbReference>
<dbReference type="DrugBank" id="DB02076">
    <property type="generic name" value="6-phospho-D-gluconic acid"/>
</dbReference>
<dbReference type="DrugBank" id="DB02007">
    <property type="generic name" value="alpha-D-glucose 6-phosphate"/>
</dbReference>
<dbReference type="DrugBank" id="DB11638">
    <property type="generic name" value="Artenimol"/>
</dbReference>
<dbReference type="DrugBank" id="DB09130">
    <property type="generic name" value="Copper"/>
</dbReference>
<dbReference type="DrugBank" id="DB03937">
    <property type="generic name" value="D-erythrose 4-phosphate"/>
</dbReference>
<dbReference type="DrugBank" id="DB02548">
    <property type="generic name" value="D-glucitol 6-phosphate"/>
</dbReference>
<dbReference type="DrugBank" id="DB04493">
    <property type="generic name" value="Fructose-6-phosphate"/>
</dbReference>
<dbReference type="DrugBank" id="DB03581">
    <property type="generic name" value="Glucose-6-Phosphate"/>
</dbReference>
<dbReference type="MoonDB" id="P06744">
    <property type="type" value="Curated"/>
</dbReference>
<dbReference type="GlyConnect" id="1268">
    <property type="glycosylation" value="1 N-Linked glycan (1 site)"/>
</dbReference>
<dbReference type="GlyCosmos" id="P06744">
    <property type="glycosylation" value="1 site, 1 glycan"/>
</dbReference>
<dbReference type="GlyGen" id="P06744">
    <property type="glycosylation" value="6 sites, 3 N-linked glycans (3 sites), 1 O-linked glycan (1 site)"/>
</dbReference>
<dbReference type="iPTMnet" id="P06744"/>
<dbReference type="MetOSite" id="P06744"/>
<dbReference type="PhosphoSitePlus" id="P06744"/>
<dbReference type="SwissPalm" id="P06744"/>
<dbReference type="BioMuta" id="GPI"/>
<dbReference type="DMDM" id="17380385"/>
<dbReference type="CPTAC" id="CPTAC-2735"/>
<dbReference type="jPOST" id="P06744"/>
<dbReference type="MassIVE" id="P06744"/>
<dbReference type="PaxDb" id="9606-ENSP00000405573"/>
<dbReference type="PeptideAtlas" id="P06744"/>
<dbReference type="PRIDE" id="P06744"/>
<dbReference type="ProteomicsDB" id="51924">
    <molecule id="P06744-1"/>
</dbReference>
<dbReference type="ProteomicsDB" id="51925">
    <molecule id="P06744-2"/>
</dbReference>
<dbReference type="Pumba" id="P06744"/>
<dbReference type="TopDownProteomics" id="P06744-1">
    <molecule id="P06744-1"/>
</dbReference>
<dbReference type="TopDownProteomics" id="P06744-2">
    <molecule id="P06744-2"/>
</dbReference>
<dbReference type="Antibodypedia" id="15715">
    <property type="antibodies" value="723 antibodies from 42 providers"/>
</dbReference>
<dbReference type="CPTC" id="P06744">
    <property type="antibodies" value="3 antibodies"/>
</dbReference>
<dbReference type="DNASU" id="2821"/>
<dbReference type="Ensembl" id="ENST00000356487.11">
    <molecule id="P06744-1"/>
    <property type="protein sequence ID" value="ENSP00000348877.3"/>
    <property type="gene ID" value="ENSG00000105220.17"/>
</dbReference>
<dbReference type="Ensembl" id="ENST00000588991.7">
    <molecule id="P06744-2"/>
    <property type="protein sequence ID" value="ENSP00000465858.3"/>
    <property type="gene ID" value="ENSG00000105220.17"/>
</dbReference>
<dbReference type="GeneID" id="2821"/>
<dbReference type="KEGG" id="hsa:2821"/>
<dbReference type="MANE-Select" id="ENST00000356487.11">
    <property type="protein sequence ID" value="ENSP00000348877.3"/>
    <property type="RefSeq nucleotide sequence ID" value="NM_000175.5"/>
    <property type="RefSeq protein sequence ID" value="NP_000166.2"/>
</dbReference>
<dbReference type="UCSC" id="uc002nvg.3">
    <molecule id="P06744-1"/>
    <property type="organism name" value="human"/>
</dbReference>
<dbReference type="AGR" id="HGNC:4458"/>
<dbReference type="CTD" id="2821"/>
<dbReference type="DisGeNET" id="2821"/>
<dbReference type="GeneCards" id="GPI"/>
<dbReference type="HGNC" id="HGNC:4458">
    <property type="gene designation" value="GPI"/>
</dbReference>
<dbReference type="HPA" id="ENSG00000105220">
    <property type="expression patterns" value="Low tissue specificity"/>
</dbReference>
<dbReference type="MalaCards" id="GPI"/>
<dbReference type="MIM" id="172400">
    <property type="type" value="gene"/>
</dbReference>
<dbReference type="MIM" id="613470">
    <property type="type" value="phenotype"/>
</dbReference>
<dbReference type="neXtProt" id="NX_P06744"/>
<dbReference type="OpenTargets" id="ENSG00000105220"/>
<dbReference type="Orphanet" id="712">
    <property type="disease" value="Hemolytic anemia due to glucophosphate isomerase deficiency"/>
</dbReference>
<dbReference type="PharmGKB" id="PA28841"/>
<dbReference type="VEuPathDB" id="HostDB:ENSG00000105220"/>
<dbReference type="eggNOG" id="KOG2446">
    <property type="taxonomic scope" value="Eukaryota"/>
</dbReference>
<dbReference type="GeneTree" id="ENSGT00390000000707"/>
<dbReference type="HOGENOM" id="CLU_017947_3_0_1"/>
<dbReference type="InParanoid" id="P06744"/>
<dbReference type="OMA" id="DWYRQLW"/>
<dbReference type="OrthoDB" id="5831190at2759"/>
<dbReference type="PAN-GO" id="P06744">
    <property type="GO annotations" value="6 GO annotations based on evolutionary models"/>
</dbReference>
<dbReference type="PhylomeDB" id="P06744"/>
<dbReference type="TreeFam" id="TF300436"/>
<dbReference type="BioCyc" id="MetaCyc:HS02693-MONOMER"/>
<dbReference type="BRENDA" id="5.3.1.9">
    <property type="organism ID" value="2681"/>
</dbReference>
<dbReference type="PathwayCommons" id="P06744"/>
<dbReference type="Reactome" id="R-HSA-5628897">
    <property type="pathway name" value="TP53 Regulates Metabolic Genes"/>
</dbReference>
<dbReference type="Reactome" id="R-HSA-6798695">
    <property type="pathway name" value="Neutrophil degranulation"/>
</dbReference>
<dbReference type="Reactome" id="R-HSA-70171">
    <property type="pathway name" value="Glycolysis"/>
</dbReference>
<dbReference type="Reactome" id="R-HSA-70263">
    <property type="pathway name" value="Gluconeogenesis"/>
</dbReference>
<dbReference type="SABIO-RK" id="P06744"/>
<dbReference type="SignaLink" id="P06744"/>
<dbReference type="SIGNOR" id="P06744"/>
<dbReference type="UniPathway" id="UPA00109">
    <property type="reaction ID" value="UER00181"/>
</dbReference>
<dbReference type="BioGRID-ORCS" id="2821">
    <property type="hits" value="267 hits in 1178 CRISPR screens"/>
</dbReference>
<dbReference type="CD-CODE" id="91857CE7">
    <property type="entry name" value="Nucleolus"/>
</dbReference>
<dbReference type="CD-CODE" id="FB4E32DD">
    <property type="entry name" value="Presynaptic clusters and postsynaptic densities"/>
</dbReference>
<dbReference type="ChiTaRS" id="GPI">
    <property type="organism name" value="human"/>
</dbReference>
<dbReference type="EvolutionaryTrace" id="P06744"/>
<dbReference type="GeneWiki" id="Glucose-6-phosphate_isomerase"/>
<dbReference type="GenomeRNAi" id="2821"/>
<dbReference type="Pharos" id="P06744">
    <property type="development level" value="Tbio"/>
</dbReference>
<dbReference type="PRO" id="PR:P06744"/>
<dbReference type="Proteomes" id="UP000005640">
    <property type="component" value="Chromosome 19"/>
</dbReference>
<dbReference type="RNAct" id="P06744">
    <property type="molecule type" value="protein"/>
</dbReference>
<dbReference type="Bgee" id="ENSG00000105220">
    <property type="expression patterns" value="Expressed in apex of heart and 201 other cell types or tissues"/>
</dbReference>
<dbReference type="ExpressionAtlas" id="P06744">
    <property type="expression patterns" value="baseline and differential"/>
</dbReference>
<dbReference type="GO" id="GO:0060170">
    <property type="term" value="C:ciliary membrane"/>
    <property type="evidence" value="ECO:0007669"/>
    <property type="project" value="Ensembl"/>
</dbReference>
<dbReference type="GO" id="GO:0005829">
    <property type="term" value="C:cytosol"/>
    <property type="evidence" value="ECO:0000318"/>
    <property type="project" value="GO_Central"/>
</dbReference>
<dbReference type="GO" id="GO:0070062">
    <property type="term" value="C:extracellular exosome"/>
    <property type="evidence" value="ECO:0007005"/>
    <property type="project" value="UniProtKB"/>
</dbReference>
<dbReference type="GO" id="GO:0005576">
    <property type="term" value="C:extracellular region"/>
    <property type="evidence" value="ECO:0000304"/>
    <property type="project" value="Reactome"/>
</dbReference>
<dbReference type="GO" id="GO:1904813">
    <property type="term" value="C:ficolin-1-rich granule lumen"/>
    <property type="evidence" value="ECO:0000304"/>
    <property type="project" value="Reactome"/>
</dbReference>
<dbReference type="GO" id="GO:0016020">
    <property type="term" value="C:membrane"/>
    <property type="evidence" value="ECO:0007005"/>
    <property type="project" value="UniProtKB"/>
</dbReference>
<dbReference type="GO" id="GO:0034774">
    <property type="term" value="C:secretory granule lumen"/>
    <property type="evidence" value="ECO:0000304"/>
    <property type="project" value="Reactome"/>
</dbReference>
<dbReference type="GO" id="GO:0097367">
    <property type="term" value="F:carbohydrate derivative binding"/>
    <property type="evidence" value="ECO:0007669"/>
    <property type="project" value="InterPro"/>
</dbReference>
<dbReference type="GO" id="GO:0005125">
    <property type="term" value="F:cytokine activity"/>
    <property type="evidence" value="ECO:0007669"/>
    <property type="project" value="UniProtKB-KW"/>
</dbReference>
<dbReference type="GO" id="GO:0004347">
    <property type="term" value="F:glucose-6-phosphate isomerase activity"/>
    <property type="evidence" value="ECO:0000314"/>
    <property type="project" value="UniProtKB"/>
</dbReference>
<dbReference type="GO" id="GO:0008083">
    <property type="term" value="F:growth factor activity"/>
    <property type="evidence" value="ECO:0007669"/>
    <property type="project" value="UniProtKB-KW"/>
</dbReference>
<dbReference type="GO" id="GO:0048029">
    <property type="term" value="F:monosaccharide binding"/>
    <property type="evidence" value="ECO:0000318"/>
    <property type="project" value="GO_Central"/>
</dbReference>
<dbReference type="GO" id="GO:0031625">
    <property type="term" value="F:ubiquitin protein ligase binding"/>
    <property type="evidence" value="ECO:0000353"/>
    <property type="project" value="ParkinsonsUK-UCL"/>
</dbReference>
<dbReference type="GO" id="GO:0061621">
    <property type="term" value="P:canonical glycolysis"/>
    <property type="evidence" value="ECO:0007669"/>
    <property type="project" value="Ensembl"/>
</dbReference>
<dbReference type="GO" id="GO:0005975">
    <property type="term" value="P:carbohydrate metabolic process"/>
    <property type="evidence" value="ECO:0000303"/>
    <property type="project" value="ProtInc"/>
</dbReference>
<dbReference type="GO" id="GO:0034101">
    <property type="term" value="P:erythrocyte homeostasis"/>
    <property type="evidence" value="ECO:0007669"/>
    <property type="project" value="Ensembl"/>
</dbReference>
<dbReference type="GO" id="GO:0006002">
    <property type="term" value="P:fructose 6-phosphate metabolic process"/>
    <property type="evidence" value="ECO:0007669"/>
    <property type="project" value="Ensembl"/>
</dbReference>
<dbReference type="GO" id="GO:0006094">
    <property type="term" value="P:gluconeogenesis"/>
    <property type="evidence" value="ECO:0000318"/>
    <property type="project" value="GO_Central"/>
</dbReference>
<dbReference type="GO" id="GO:0051156">
    <property type="term" value="P:glucose 6-phosphate metabolic process"/>
    <property type="evidence" value="ECO:0000314"/>
    <property type="project" value="UniProtKB"/>
</dbReference>
<dbReference type="GO" id="GO:0042593">
    <property type="term" value="P:glucose homeostasis"/>
    <property type="evidence" value="ECO:0007669"/>
    <property type="project" value="Ensembl"/>
</dbReference>
<dbReference type="GO" id="GO:0006096">
    <property type="term" value="P:glycolytic process"/>
    <property type="evidence" value="ECO:0000318"/>
    <property type="project" value="GO_Central"/>
</dbReference>
<dbReference type="GO" id="GO:0007599">
    <property type="term" value="P:hemostasis"/>
    <property type="evidence" value="ECO:0000304"/>
    <property type="project" value="ProtInc"/>
</dbReference>
<dbReference type="GO" id="GO:0006959">
    <property type="term" value="P:humoral immune response"/>
    <property type="evidence" value="ECO:0000304"/>
    <property type="project" value="ProtInc"/>
</dbReference>
<dbReference type="GO" id="GO:0001701">
    <property type="term" value="P:in utero embryonic development"/>
    <property type="evidence" value="ECO:0007669"/>
    <property type="project" value="Ensembl"/>
</dbReference>
<dbReference type="GO" id="GO:0007611">
    <property type="term" value="P:learning or memory"/>
    <property type="evidence" value="ECO:0007669"/>
    <property type="project" value="Ensembl"/>
</dbReference>
<dbReference type="GO" id="GO:0001707">
    <property type="term" value="P:mesoderm formation"/>
    <property type="evidence" value="ECO:0007669"/>
    <property type="project" value="Ensembl"/>
</dbReference>
<dbReference type="GO" id="GO:0043066">
    <property type="term" value="P:negative regulation of apoptotic process"/>
    <property type="evidence" value="ECO:0007669"/>
    <property type="project" value="Ensembl"/>
</dbReference>
<dbReference type="GO" id="GO:0010595">
    <property type="term" value="P:positive regulation of endothelial cell migration"/>
    <property type="evidence" value="ECO:0000314"/>
    <property type="project" value="UniProtKB"/>
</dbReference>
<dbReference type="GO" id="GO:0002639">
    <property type="term" value="P:positive regulation of immunoglobulin production"/>
    <property type="evidence" value="ECO:0000314"/>
    <property type="project" value="CAFA"/>
</dbReference>
<dbReference type="GO" id="GO:0046686">
    <property type="term" value="P:response to cadmium ion"/>
    <property type="evidence" value="ECO:0007669"/>
    <property type="project" value="Ensembl"/>
</dbReference>
<dbReference type="GO" id="GO:0032355">
    <property type="term" value="P:response to estradiol"/>
    <property type="evidence" value="ECO:0007669"/>
    <property type="project" value="Ensembl"/>
</dbReference>
<dbReference type="GO" id="GO:0035902">
    <property type="term" value="P:response to immobilization stress"/>
    <property type="evidence" value="ECO:0007669"/>
    <property type="project" value="Ensembl"/>
</dbReference>
<dbReference type="GO" id="GO:0035994">
    <property type="term" value="P:response to muscle stretch"/>
    <property type="evidence" value="ECO:0007669"/>
    <property type="project" value="Ensembl"/>
</dbReference>
<dbReference type="GO" id="GO:0032570">
    <property type="term" value="P:response to progesterone"/>
    <property type="evidence" value="ECO:0007669"/>
    <property type="project" value="Ensembl"/>
</dbReference>
<dbReference type="GO" id="GO:0033574">
    <property type="term" value="P:response to testosterone"/>
    <property type="evidence" value="ECO:0007669"/>
    <property type="project" value="Ensembl"/>
</dbReference>
<dbReference type="CDD" id="cd05015">
    <property type="entry name" value="SIS_PGI_1"/>
    <property type="match status" value="1"/>
</dbReference>
<dbReference type="CDD" id="cd05016">
    <property type="entry name" value="SIS_PGI_2"/>
    <property type="match status" value="1"/>
</dbReference>
<dbReference type="FunFam" id="1.10.1390.10:FF:000001">
    <property type="entry name" value="Glucose-6-phosphate isomerase"/>
    <property type="match status" value="1"/>
</dbReference>
<dbReference type="FunFam" id="3.40.50.10490:FF:000004">
    <property type="entry name" value="Glucose-6-phosphate isomerase"/>
    <property type="match status" value="1"/>
</dbReference>
<dbReference type="FunFam" id="3.40.50.10490:FF:000093">
    <property type="entry name" value="Glucose-6-phosphate isomerase"/>
    <property type="match status" value="1"/>
</dbReference>
<dbReference type="Gene3D" id="1.10.1390.10">
    <property type="match status" value="1"/>
</dbReference>
<dbReference type="Gene3D" id="3.40.50.10490">
    <property type="entry name" value="Glucose-6-phosphate isomerase like protein, domain 1"/>
    <property type="match status" value="2"/>
</dbReference>
<dbReference type="HAMAP" id="MF_00473">
    <property type="entry name" value="G6P_isomerase"/>
    <property type="match status" value="1"/>
</dbReference>
<dbReference type="InterPro" id="IPR001672">
    <property type="entry name" value="G6P_Isomerase"/>
</dbReference>
<dbReference type="InterPro" id="IPR023096">
    <property type="entry name" value="G6P_Isomerase_C"/>
</dbReference>
<dbReference type="InterPro" id="IPR018189">
    <property type="entry name" value="Phosphoglucose_isomerase_CS"/>
</dbReference>
<dbReference type="InterPro" id="IPR046348">
    <property type="entry name" value="SIS_dom_sf"/>
</dbReference>
<dbReference type="InterPro" id="IPR035476">
    <property type="entry name" value="SIS_PGI_1"/>
</dbReference>
<dbReference type="InterPro" id="IPR035482">
    <property type="entry name" value="SIS_PGI_2"/>
</dbReference>
<dbReference type="NCBIfam" id="NF001211">
    <property type="entry name" value="PRK00179.1"/>
    <property type="match status" value="1"/>
</dbReference>
<dbReference type="PANTHER" id="PTHR11469">
    <property type="entry name" value="GLUCOSE-6-PHOSPHATE ISOMERASE"/>
    <property type="match status" value="1"/>
</dbReference>
<dbReference type="PANTHER" id="PTHR11469:SF1">
    <property type="entry name" value="GLUCOSE-6-PHOSPHATE ISOMERASE"/>
    <property type="match status" value="1"/>
</dbReference>
<dbReference type="Pfam" id="PF00342">
    <property type="entry name" value="PGI"/>
    <property type="match status" value="1"/>
</dbReference>
<dbReference type="PRINTS" id="PR00662">
    <property type="entry name" value="G6PISOMERASE"/>
</dbReference>
<dbReference type="SUPFAM" id="SSF53697">
    <property type="entry name" value="SIS domain"/>
    <property type="match status" value="1"/>
</dbReference>
<dbReference type="PROSITE" id="PS00765">
    <property type="entry name" value="P_GLUCOSE_ISOMERASE_1"/>
    <property type="match status" value="1"/>
</dbReference>
<dbReference type="PROSITE" id="PS00174">
    <property type="entry name" value="P_GLUCOSE_ISOMERASE_2"/>
    <property type="match status" value="1"/>
</dbReference>
<dbReference type="PROSITE" id="PS51463">
    <property type="entry name" value="P_GLUCOSE_ISOMERASE_3"/>
    <property type="match status" value="1"/>
</dbReference>
<keyword id="KW-0002">3D-structure</keyword>
<keyword id="KW-0007">Acetylation</keyword>
<keyword id="KW-0025">Alternative splicing</keyword>
<keyword id="KW-0202">Cytokine</keyword>
<keyword id="KW-0963">Cytoplasm</keyword>
<keyword id="KW-0903">Direct protein sequencing</keyword>
<keyword id="KW-0225">Disease variant</keyword>
<keyword id="KW-0312">Gluconeogenesis</keyword>
<keyword id="KW-0324">Glycolysis</keyword>
<keyword id="KW-0339">Growth factor</keyword>
<keyword id="KW-0360">Hereditary hemolytic anemia</keyword>
<keyword id="KW-0379">Hydroxylation</keyword>
<keyword id="KW-0413">Isomerase</keyword>
<keyword id="KW-0597">Phosphoprotein</keyword>
<keyword id="KW-1267">Proteomics identification</keyword>
<keyword id="KW-1185">Reference proteome</keyword>
<keyword id="KW-0964">Secreted</keyword>
<keyword id="KW-0832">Ubl conjugation</keyword>
<feature type="initiator methionine" description="Removed" evidence="22 32">
    <location>
        <position position="1"/>
    </location>
</feature>
<feature type="chain" id="PRO_0000180537" description="Glucose-6-phosphate isomerase">
    <location>
        <begin position="2"/>
        <end position="558"/>
    </location>
</feature>
<feature type="active site" description="Proton donor" evidence="4 7 8">
    <location>
        <position position="358"/>
    </location>
</feature>
<feature type="active site" evidence="4 7 8">
    <location>
        <position position="389"/>
    </location>
</feature>
<feature type="active site" evidence="4 7 8">
    <location>
        <position position="519"/>
    </location>
</feature>
<feature type="binding site" evidence="1">
    <location>
        <begin position="159"/>
        <end position="160"/>
    </location>
    <ligand>
        <name>D-glucose 6-phosphate</name>
        <dbReference type="ChEBI" id="CHEBI:61548"/>
    </ligand>
</feature>
<feature type="binding site" evidence="1">
    <location>
        <begin position="210"/>
        <end position="215"/>
    </location>
    <ligand>
        <name>D-glucose 6-phosphate</name>
        <dbReference type="ChEBI" id="CHEBI:61548"/>
    </ligand>
</feature>
<feature type="binding site" evidence="1">
    <location>
        <position position="354"/>
    </location>
    <ligand>
        <name>D-glucose 6-phosphate</name>
        <dbReference type="ChEBI" id="CHEBI:61548"/>
    </ligand>
</feature>
<feature type="binding site" evidence="1">
    <location>
        <position position="358"/>
    </location>
    <ligand>
        <name>D-glucose 6-phosphate</name>
        <dbReference type="ChEBI" id="CHEBI:61548"/>
    </ligand>
</feature>
<feature type="binding site" evidence="1">
    <location>
        <position position="389"/>
    </location>
    <ligand>
        <name>D-glucose 6-phosphate</name>
        <dbReference type="ChEBI" id="CHEBI:61548"/>
    </ligand>
</feature>
<feature type="binding site" evidence="1">
    <location>
        <position position="519"/>
    </location>
    <ligand>
        <name>D-glucose 6-phosphate</name>
        <dbReference type="ChEBI" id="CHEBI:61548"/>
    </ligand>
</feature>
<feature type="modified residue" description="N-acetylalanine" evidence="22 32">
    <location>
        <position position="2"/>
    </location>
</feature>
<feature type="modified residue" description="N6-acetyllysine" evidence="33">
    <location>
        <position position="12"/>
    </location>
</feature>
<feature type="modified residue" description="N6-(2-hydroxyisobutyryl)lysine" evidence="13">
    <location>
        <position position="34"/>
    </location>
</feature>
<feature type="modified residue" description="Phosphoserine" evidence="35">
    <location>
        <position position="107"/>
    </location>
</feature>
<feature type="modified residue" description="Phosphothreonine" evidence="31 34 35 36">
    <location>
        <position position="109"/>
    </location>
</feature>
<feature type="modified residue" description="N6-acetyllysine" evidence="33">
    <location>
        <position position="142"/>
    </location>
</feature>
<feature type="modified residue" description="Phosphoserine; by CK2" evidence="3 9">
    <location>
        <position position="185"/>
    </location>
</feature>
<feature type="modified residue" description="Phosphothreonine" evidence="2">
    <location>
        <position position="250"/>
    </location>
</feature>
<feature type="modified residue" description="N6-acetyllysine; alternate" evidence="1">
    <location>
        <position position="454"/>
    </location>
</feature>
<feature type="modified residue" description="N6-malonyllysine; alternate" evidence="11">
    <location>
        <position position="454"/>
    </location>
</feature>
<feature type="modified residue" description="N6-succinyllysine; alternate" evidence="1">
    <location>
        <position position="454"/>
    </location>
</feature>
<feature type="modified residue" description="Phosphoserine" evidence="35">
    <location>
        <position position="455"/>
    </location>
</feature>
<feature type="splice variant" id="VSP_043475" description="In isoform 2." evidence="26">
    <original>M</original>
    <variation>MVALCSLQHLGSSDPRALPTLPTATSGQRPAKRRRKSPAM</variation>
    <location>
        <position position="1"/>
    </location>
</feature>
<feature type="splice variant" id="VSP_043476" description="In isoform 2." evidence="26">
    <location>
        <begin position="135"/>
        <end position="162"/>
    </location>
</feature>
<feature type="sequence variant" id="VAR_002516" description="In CNSHA4; GPI Matsumoto; dbSNP:rs267606852." evidence="18">
    <original>T</original>
    <variation>I</variation>
    <location>
        <position position="5"/>
    </location>
</feature>
<feature type="sequence variant" id="VAR_002517" description="In CNSHA4; severe form with neurological deficits; GPI Homburg; dbSNP:rs137853586." evidence="20">
    <original>H</original>
    <variation>P</variation>
    <location>
        <position position="20"/>
    </location>
</feature>
<feature type="sequence variant" id="VAR_002518" description="In CNSHA4; GPI Elyria; dbSNP:rs1246980119." evidence="19">
    <original>R</original>
    <variation>G</variation>
    <location>
        <position position="75"/>
    </location>
</feature>
<feature type="sequence variant" id="VAR_002519" description="In CNSHA4; dbSNP:rs983725326." evidence="15">
    <original>R</original>
    <variation>W</variation>
    <location>
        <position position="83"/>
    </location>
</feature>
<feature type="sequence variant" id="VAR_002521" description="In CNSHA4; GPI Sarcina; dbSNP:rs757341382." evidence="17">
    <original>V</original>
    <variation>M</variation>
    <location>
        <position position="101"/>
    </location>
</feature>
<feature type="sequence variant" id="VAR_002520" description="In CNSHA4; dbSNP:rs137853582." evidence="16">
    <original>G</original>
    <variation>S</variation>
    <location>
        <position position="159"/>
    </location>
</feature>
<feature type="sequence variant" id="VAR_082092" description="In CNSHA4; uncertain significance." evidence="12">
    <original>S</original>
    <variation>P</variation>
    <location>
        <position position="160"/>
    </location>
</feature>
<feature type="sequence variant" id="VAR_002522" description="In CNSHA4; GPI Bari and Mola; dbSNP:rs1426869331." evidence="17">
    <original>T</original>
    <variation>I</variation>
    <location>
        <position position="195"/>
    </location>
</feature>
<feature type="sequence variant" id="VAR_018816" description="In dbSNP:rs8191371." evidence="21">
    <original>I</original>
    <variation>T</variation>
    <location>
        <position position="208"/>
    </location>
</feature>
<feature type="sequence variant" id="VAR_002523" description="In CNSHA4; GPI Iwate; dbSNP:rs61754634." evidence="15 18">
    <original>T</original>
    <variation>M</variation>
    <location>
        <position position="224"/>
    </location>
</feature>
<feature type="sequence variant" id="VAR_002524" description="In CNSHA4; dbSNP:rs1250029517." evidence="15">
    <original>R</original>
    <variation>H</variation>
    <location>
        <position position="273"/>
    </location>
</feature>
<feature type="sequence variant" id="VAR_002525" description="In CNSHA4; dbSNP:rs34306618." evidence="15">
    <original>S</original>
    <variation>L</variation>
    <location>
        <position position="278"/>
    </location>
</feature>
<feature type="sequence variant" id="VAR_002526" description="In CNSHA4; dbSNP:rs1435398228." evidence="19">
    <original>A</original>
    <variation>P</variation>
    <location>
        <position position="300"/>
    </location>
</feature>
<feature type="sequence variant" id="VAR_033943" description="In dbSNP:rs2230294.">
    <original>R</original>
    <variation>H</variation>
    <location>
        <position position="308"/>
    </location>
</feature>
<feature type="sequence variant" id="VAR_002527" description="In CNSHA4; severe form with neurological deficits; GPI Homburg; dbSNP:rs137853587." evidence="20">
    <original>L</original>
    <variation>P</variation>
    <location>
        <position position="339"/>
    </location>
</feature>
<feature type="sequence variant" id="VAR_002528" description="In CNSHA4; GPI Narita and Morcone; dbSNP:rs267606851." evidence="17 18">
    <original>Q</original>
    <variation>R</variation>
    <location>
        <position position="343"/>
    </location>
</feature>
<feature type="sequence variant" id="VAR_002529" description="In CNSHA4; GPI Mount Scopus; dbSNP:rs758132799." evidence="15 19">
    <original>R</original>
    <variation>C</variation>
    <location>
        <position position="347"/>
    </location>
</feature>
<feature type="sequence variant" id="VAR_002530" description="In CNSHA4; dbSNP:rs137853583." evidence="16">
    <original>R</original>
    <variation>H</variation>
    <location>
        <position position="347"/>
    </location>
</feature>
<feature type="sequence variant" id="VAR_002531" description="In CNSHA4; GPI Kinki; dbSNP:rs267606853." evidence="18">
    <original>T</original>
    <variation>R</variation>
    <location>
        <position position="375"/>
    </location>
</feature>
<feature type="sequence variant" id="VAR_002532" description="In CNSHA4; severe form; GPI Calden; dbSNP:rs139382538." evidence="20">
    <original>H</original>
    <variation>R</variation>
    <location>
        <position position="389"/>
    </location>
</feature>
<feature type="sequence variant" id="VAR_082093" description="In CNSHA4; Strongly reduced glucose-6-phosphate isomerase activity; dbSNP:rs1364382189." evidence="12">
    <original>R</original>
    <variation>C</variation>
    <location>
        <position position="472"/>
    </location>
</feature>
<feature type="sequence variant" id="VAR_002533" description="In CNSHA4; dbSNP:rs148811525." evidence="19">
    <original>R</original>
    <variation>H</variation>
    <location>
        <position position="472"/>
    </location>
</feature>
<feature type="sequence variant" id="VAR_002534" description="In CNSHA4; dbSNP:rs374583873." evidence="15">
    <original>L</original>
    <variation>F</variation>
    <location>
        <position position="487"/>
    </location>
</feature>
<feature type="sequence variant" id="VAR_002535" description="In CNSHA4; dbSNP:rs900848255." evidence="15">
    <original>E</original>
    <variation>K</variation>
    <location>
        <position position="495"/>
    </location>
</feature>
<feature type="sequence variant" id="VAR_002536" description="In CNSHA4; severe form; GPI Calden." evidence="20">
    <original>L</original>
    <variation>V</variation>
    <location>
        <position position="517"/>
    </location>
</feature>
<feature type="sequence variant" id="VAR_002537" description="In CNSHA4; dbSNP:rs137853584." evidence="16 17">
    <original>I</original>
    <variation>T</variation>
    <location>
        <position position="525"/>
    </location>
</feature>
<feature type="sequence variant" id="VAR_002538" description="In CNSHA4; GPI Fukuoka and Kinki; dbSNP:rs137853585." evidence="18">
    <original>D</original>
    <variation>N</variation>
    <location>
        <position position="539"/>
    </location>
</feature>
<feature type="mutagenesis site" description="Retained full enzymatic activity." evidence="9">
    <original>S</original>
    <variation>A</variation>
    <location>
        <position position="185"/>
    </location>
</feature>
<feature type="mutagenesis site" description="Decreased enzymatic activity." evidence="9">
    <original>S</original>
    <variation>E</variation>
    <location>
        <position position="185"/>
    </location>
</feature>
<feature type="sequence conflict" description="In Ref. 1; AAA36368." evidence="29" ref="1">
    <original>G</original>
    <variation>V</variation>
    <location>
        <position position="158"/>
    </location>
</feature>
<feature type="sequence conflict" description="In Ref. 2; AAF22645." evidence="29" ref="2">
    <original>L</original>
    <variation>V</variation>
    <location>
        <position position="426"/>
    </location>
</feature>
<feature type="sequence conflict" description="In Ref. 2; AAF22645." evidence="29" ref="2">
    <original>L</original>
    <variation>V</variation>
    <location>
        <position position="436"/>
    </location>
</feature>
<feature type="helix" evidence="37">
    <location>
        <begin position="3"/>
        <end position="6"/>
    </location>
</feature>
<feature type="helix" evidence="37">
    <location>
        <begin position="8"/>
        <end position="20"/>
    </location>
</feature>
<feature type="helix" evidence="37">
    <location>
        <begin position="21"/>
        <end position="23"/>
    </location>
</feature>
<feature type="helix" evidence="37">
    <location>
        <begin position="26"/>
        <end position="32"/>
    </location>
</feature>
<feature type="helix" evidence="37">
    <location>
        <begin position="36"/>
        <end position="39"/>
    </location>
</feature>
<feature type="strand" evidence="37">
    <location>
        <begin position="41"/>
        <end position="45"/>
    </location>
</feature>
<feature type="strand" evidence="37">
    <location>
        <begin position="50"/>
        <end position="54"/>
    </location>
</feature>
<feature type="strand" evidence="37">
    <location>
        <begin position="57"/>
        <end position="59"/>
    </location>
</feature>
<feature type="helix" evidence="37">
    <location>
        <begin position="62"/>
        <end position="74"/>
    </location>
</feature>
<feature type="helix" evidence="37">
    <location>
        <begin position="77"/>
        <end position="85"/>
    </location>
</feature>
<feature type="turn" evidence="37">
    <location>
        <begin position="92"/>
        <end position="95"/>
    </location>
</feature>
<feature type="helix" evidence="37">
    <location>
        <begin position="100"/>
        <end position="103"/>
    </location>
</feature>
<feature type="strand" evidence="37">
    <location>
        <begin position="116"/>
        <end position="118"/>
    </location>
</feature>
<feature type="helix" evidence="37">
    <location>
        <begin position="119"/>
        <end position="137"/>
    </location>
</feature>
<feature type="strand" evidence="37">
    <location>
        <begin position="151"/>
        <end position="155"/>
    </location>
</feature>
<feature type="helix" evidence="37">
    <location>
        <begin position="158"/>
        <end position="160"/>
    </location>
</feature>
<feature type="helix" evidence="37">
    <location>
        <begin position="162"/>
        <end position="170"/>
    </location>
</feature>
<feature type="helix" evidence="37">
    <location>
        <begin position="172"/>
        <end position="174"/>
    </location>
</feature>
<feature type="strand" evidence="37">
    <location>
        <begin position="180"/>
        <end position="184"/>
    </location>
</feature>
<feature type="helix" evidence="37">
    <location>
        <begin position="189"/>
        <end position="196"/>
    </location>
</feature>
<feature type="helix" evidence="37">
    <location>
        <begin position="201"/>
        <end position="203"/>
    </location>
</feature>
<feature type="strand" evidence="37">
    <location>
        <begin position="204"/>
        <end position="209"/>
    </location>
</feature>
<feature type="strand" evidence="37">
    <location>
        <begin position="211"/>
        <end position="213"/>
    </location>
</feature>
<feature type="helix" evidence="37">
    <location>
        <begin position="216"/>
        <end position="233"/>
    </location>
</feature>
<feature type="helix" evidence="37">
    <location>
        <begin position="236"/>
        <end position="238"/>
    </location>
</feature>
<feature type="helix" evidence="37">
    <location>
        <begin position="239"/>
        <end position="242"/>
    </location>
</feature>
<feature type="strand" evidence="37">
    <location>
        <begin position="243"/>
        <end position="248"/>
    </location>
</feature>
<feature type="helix" evidence="37">
    <location>
        <begin position="250"/>
        <end position="256"/>
    </location>
</feature>
<feature type="helix" evidence="37">
    <location>
        <begin position="260"/>
        <end position="262"/>
    </location>
</feature>
<feature type="strand" evidence="37">
    <location>
        <begin position="263"/>
        <end position="265"/>
    </location>
</feature>
<feature type="helix" evidence="37">
    <location>
        <begin position="272"/>
        <end position="274"/>
    </location>
</feature>
<feature type="turn" evidence="37">
    <location>
        <begin position="276"/>
        <end position="278"/>
    </location>
</feature>
<feature type="helix" evidence="37">
    <location>
        <begin position="279"/>
        <end position="281"/>
    </location>
</feature>
<feature type="helix" evidence="37">
    <location>
        <begin position="282"/>
        <end position="288"/>
    </location>
</feature>
<feature type="helix" evidence="37">
    <location>
        <begin position="290"/>
        <end position="309"/>
    </location>
</feature>
<feature type="helix" evidence="37">
    <location>
        <begin position="312"/>
        <end position="314"/>
    </location>
</feature>
<feature type="helix" evidence="37">
    <location>
        <begin position="316"/>
        <end position="329"/>
    </location>
</feature>
<feature type="strand" evidence="37">
    <location>
        <begin position="335"/>
        <end position="341"/>
    </location>
</feature>
<feature type="helix" evidence="37">
    <location>
        <begin position="343"/>
        <end position="345"/>
    </location>
</feature>
<feature type="helix" evidence="37">
    <location>
        <begin position="348"/>
        <end position="360"/>
    </location>
</feature>
<feature type="strand" evidence="39">
    <location>
        <begin position="366"/>
        <end position="368"/>
    </location>
</feature>
<feature type="strand" evidence="37">
    <location>
        <begin position="378"/>
        <end position="380"/>
    </location>
</feature>
<feature type="helix" evidence="37">
    <location>
        <begin position="386"/>
        <end position="389"/>
    </location>
</feature>
<feature type="helix" evidence="37">
    <location>
        <begin position="392"/>
        <end position="397"/>
    </location>
</feature>
<feature type="strand" evidence="38">
    <location>
        <begin position="398"/>
        <end position="400"/>
    </location>
</feature>
<feature type="strand" evidence="37">
    <location>
        <begin position="404"/>
        <end position="411"/>
    </location>
</feature>
<feature type="helix" evidence="37">
    <location>
        <begin position="416"/>
        <end position="419"/>
    </location>
</feature>
<feature type="helix" evidence="37">
    <location>
        <begin position="420"/>
        <end position="438"/>
    </location>
</feature>
<feature type="helix" evidence="37">
    <location>
        <begin position="442"/>
        <end position="451"/>
    </location>
</feature>
<feature type="helix" evidence="37">
    <location>
        <begin position="456"/>
        <end position="462"/>
    </location>
</feature>
<feature type="helix" evidence="37">
    <location>
        <begin position="463"/>
        <end position="466"/>
    </location>
</feature>
<feature type="strand" evidence="37">
    <location>
        <begin position="474"/>
        <end position="481"/>
    </location>
</feature>
<feature type="helix" evidence="37">
    <location>
        <begin position="484"/>
        <end position="505"/>
    </location>
</feature>
<feature type="helix" evidence="37">
    <location>
        <begin position="513"/>
        <end position="515"/>
    </location>
</feature>
<feature type="helix" evidence="37">
    <location>
        <begin position="516"/>
        <end position="528"/>
    </location>
</feature>
<feature type="strand" evidence="37">
    <location>
        <begin position="530"/>
        <end position="532"/>
    </location>
</feature>
<feature type="helix" evidence="37">
    <location>
        <begin position="540"/>
        <end position="552"/>
    </location>
</feature>
<evidence type="ECO:0000250" key="1">
    <source>
        <dbReference type="UniProtKB" id="P06745"/>
    </source>
</evidence>
<evidence type="ECO:0000250" key="2">
    <source>
        <dbReference type="UniProtKB" id="Q6P6V0"/>
    </source>
</evidence>
<evidence type="ECO:0000269" key="3">
    <source>
    </source>
</evidence>
<evidence type="ECO:0000269" key="4">
    <source>
    </source>
</evidence>
<evidence type="ECO:0000269" key="5">
    <source>
    </source>
</evidence>
<evidence type="ECO:0000269" key="6">
    <source>
    </source>
</evidence>
<evidence type="ECO:0000269" key="7">
    <source>
    </source>
</evidence>
<evidence type="ECO:0000269" key="8">
    <source>
    </source>
</evidence>
<evidence type="ECO:0000269" key="9">
    <source>
    </source>
</evidence>
<evidence type="ECO:0000269" key="10">
    <source>
    </source>
</evidence>
<evidence type="ECO:0000269" key="11">
    <source>
    </source>
</evidence>
<evidence type="ECO:0000269" key="12">
    <source>
    </source>
</evidence>
<evidence type="ECO:0000269" key="13">
    <source>
    </source>
</evidence>
<evidence type="ECO:0000269" key="14">
    <source>
    </source>
</evidence>
<evidence type="ECO:0000269" key="15">
    <source>
    </source>
</evidence>
<evidence type="ECO:0000269" key="16">
    <source>
    </source>
</evidence>
<evidence type="ECO:0000269" key="17">
    <source>
    </source>
</evidence>
<evidence type="ECO:0000269" key="18">
    <source>
    </source>
</evidence>
<evidence type="ECO:0000269" key="19">
    <source>
    </source>
</evidence>
<evidence type="ECO:0000269" key="20">
    <source>
    </source>
</evidence>
<evidence type="ECO:0000269" key="21">
    <source ref="3"/>
</evidence>
<evidence type="ECO:0000269" key="22">
    <source ref="8"/>
</evidence>
<evidence type="ECO:0000303" key="23">
    <source>
    </source>
</evidence>
<evidence type="ECO:0000303" key="24">
    <source>
    </source>
</evidence>
<evidence type="ECO:0000303" key="25">
    <source>
    </source>
</evidence>
<evidence type="ECO:0000303" key="26">
    <source>
    </source>
</evidence>
<evidence type="ECO:0000303" key="27">
    <source>
    </source>
</evidence>
<evidence type="ECO:0000303" key="28">
    <source>
    </source>
</evidence>
<evidence type="ECO:0000305" key="29"/>
<evidence type="ECO:0000312" key="30">
    <source>
        <dbReference type="HGNC" id="HGNC:4458"/>
    </source>
</evidence>
<evidence type="ECO:0007744" key="31">
    <source>
    </source>
</evidence>
<evidence type="ECO:0007744" key="32">
    <source>
    </source>
</evidence>
<evidence type="ECO:0007744" key="33">
    <source>
    </source>
</evidence>
<evidence type="ECO:0007744" key="34">
    <source>
    </source>
</evidence>
<evidence type="ECO:0007744" key="35">
    <source>
    </source>
</evidence>
<evidence type="ECO:0007744" key="36">
    <source>
    </source>
</evidence>
<evidence type="ECO:0007829" key="37">
    <source>
        <dbReference type="PDB" id="1IAT"/>
    </source>
</evidence>
<evidence type="ECO:0007829" key="38">
    <source>
        <dbReference type="PDB" id="1JLH"/>
    </source>
</evidence>
<evidence type="ECO:0007829" key="39">
    <source>
        <dbReference type="PDB" id="6XUH"/>
    </source>
</evidence>
<reference key="1">
    <citation type="submission" date="1987-03" db="EMBL/GenBank/DDBJ databases">
        <authorList>
            <person name="Gurney M.E."/>
        </authorList>
    </citation>
    <scope>NUCLEOTIDE SEQUENCE [MRNA] (ISOFORM 1)</scope>
</reference>
<reference key="2">
    <citation type="journal article" date="2000" name="Biol. Reprod.">
        <title>Cloning of a glucose phosphate isomerase/neuroleukin-like sperm antigen involved in sperm agglutination.</title>
        <authorList>
            <person name="Yakirevich E."/>
            <person name="Naot Y."/>
        </authorList>
    </citation>
    <scope>NUCLEOTIDE SEQUENCE [MRNA] (ISOFORM 1)</scope>
    <source>
        <tissue>Testis</tissue>
    </source>
</reference>
<reference key="3">
    <citation type="submission" date="2003-06" db="EMBL/GenBank/DDBJ databases">
        <authorList>
            <consortium name="NIEHS SNPs program"/>
        </authorList>
    </citation>
    <scope>NUCLEOTIDE SEQUENCE [GENOMIC DNA]</scope>
    <scope>VARIANT THR-208</scope>
</reference>
<reference key="4">
    <citation type="journal article" date="2004" name="Nat. Genet.">
        <title>Complete sequencing and characterization of 21,243 full-length human cDNAs.</title>
        <authorList>
            <person name="Ota T."/>
            <person name="Suzuki Y."/>
            <person name="Nishikawa T."/>
            <person name="Otsuki T."/>
            <person name="Sugiyama T."/>
            <person name="Irie R."/>
            <person name="Wakamatsu A."/>
            <person name="Hayashi K."/>
            <person name="Sato H."/>
            <person name="Nagai K."/>
            <person name="Kimura K."/>
            <person name="Makita H."/>
            <person name="Sekine M."/>
            <person name="Obayashi M."/>
            <person name="Nishi T."/>
            <person name="Shibahara T."/>
            <person name="Tanaka T."/>
            <person name="Ishii S."/>
            <person name="Yamamoto J."/>
            <person name="Saito K."/>
            <person name="Kawai Y."/>
            <person name="Isono Y."/>
            <person name="Nakamura Y."/>
            <person name="Nagahari K."/>
            <person name="Murakami K."/>
            <person name="Yasuda T."/>
            <person name="Iwayanagi T."/>
            <person name="Wagatsuma M."/>
            <person name="Shiratori A."/>
            <person name="Sudo H."/>
            <person name="Hosoiri T."/>
            <person name="Kaku Y."/>
            <person name="Kodaira H."/>
            <person name="Kondo H."/>
            <person name="Sugawara M."/>
            <person name="Takahashi M."/>
            <person name="Kanda K."/>
            <person name="Yokoi T."/>
            <person name="Furuya T."/>
            <person name="Kikkawa E."/>
            <person name="Omura Y."/>
            <person name="Abe K."/>
            <person name="Kamihara K."/>
            <person name="Katsuta N."/>
            <person name="Sato K."/>
            <person name="Tanikawa M."/>
            <person name="Yamazaki M."/>
            <person name="Ninomiya K."/>
            <person name="Ishibashi T."/>
            <person name="Yamashita H."/>
            <person name="Murakawa K."/>
            <person name="Fujimori K."/>
            <person name="Tanai H."/>
            <person name="Kimata M."/>
            <person name="Watanabe M."/>
            <person name="Hiraoka S."/>
            <person name="Chiba Y."/>
            <person name="Ishida S."/>
            <person name="Ono Y."/>
            <person name="Takiguchi S."/>
            <person name="Watanabe S."/>
            <person name="Yosida M."/>
            <person name="Hotuta T."/>
            <person name="Kusano J."/>
            <person name="Kanehori K."/>
            <person name="Takahashi-Fujii A."/>
            <person name="Hara H."/>
            <person name="Tanase T.-O."/>
            <person name="Nomura Y."/>
            <person name="Togiya S."/>
            <person name="Komai F."/>
            <person name="Hara R."/>
            <person name="Takeuchi K."/>
            <person name="Arita M."/>
            <person name="Imose N."/>
            <person name="Musashino K."/>
            <person name="Yuuki H."/>
            <person name="Oshima A."/>
            <person name="Sasaki N."/>
            <person name="Aotsuka S."/>
            <person name="Yoshikawa Y."/>
            <person name="Matsunawa H."/>
            <person name="Ichihara T."/>
            <person name="Shiohata N."/>
            <person name="Sano S."/>
            <person name="Moriya S."/>
            <person name="Momiyama H."/>
            <person name="Satoh N."/>
            <person name="Takami S."/>
            <person name="Terashima Y."/>
            <person name="Suzuki O."/>
            <person name="Nakagawa S."/>
            <person name="Senoh A."/>
            <person name="Mizoguchi H."/>
            <person name="Goto Y."/>
            <person name="Shimizu F."/>
            <person name="Wakebe H."/>
            <person name="Hishigaki H."/>
            <person name="Watanabe T."/>
            <person name="Sugiyama A."/>
            <person name="Takemoto M."/>
            <person name="Kawakami B."/>
            <person name="Yamazaki M."/>
            <person name="Watanabe K."/>
            <person name="Kumagai A."/>
            <person name="Itakura S."/>
            <person name="Fukuzumi Y."/>
            <person name="Fujimori Y."/>
            <person name="Komiyama M."/>
            <person name="Tashiro H."/>
            <person name="Tanigami A."/>
            <person name="Fujiwara T."/>
            <person name="Ono T."/>
            <person name="Yamada K."/>
            <person name="Fujii Y."/>
            <person name="Ozaki K."/>
            <person name="Hirao M."/>
            <person name="Ohmori Y."/>
            <person name="Kawabata A."/>
            <person name="Hikiji T."/>
            <person name="Kobatake N."/>
            <person name="Inagaki H."/>
            <person name="Ikema Y."/>
            <person name="Okamoto S."/>
            <person name="Okitani R."/>
            <person name="Kawakami T."/>
            <person name="Noguchi S."/>
            <person name="Itoh T."/>
            <person name="Shigeta K."/>
            <person name="Senba T."/>
            <person name="Matsumura K."/>
            <person name="Nakajima Y."/>
            <person name="Mizuno T."/>
            <person name="Morinaga M."/>
            <person name="Sasaki M."/>
            <person name="Togashi T."/>
            <person name="Oyama M."/>
            <person name="Hata H."/>
            <person name="Watanabe M."/>
            <person name="Komatsu T."/>
            <person name="Mizushima-Sugano J."/>
            <person name="Satoh T."/>
            <person name="Shirai Y."/>
            <person name="Takahashi Y."/>
            <person name="Nakagawa K."/>
            <person name="Okumura K."/>
            <person name="Nagase T."/>
            <person name="Nomura N."/>
            <person name="Kikuchi H."/>
            <person name="Masuho Y."/>
            <person name="Yamashita R."/>
            <person name="Nakai K."/>
            <person name="Yada T."/>
            <person name="Nakamura Y."/>
            <person name="Ohara O."/>
            <person name="Isogai T."/>
            <person name="Sugano S."/>
        </authorList>
    </citation>
    <scope>NUCLEOTIDE SEQUENCE [LARGE SCALE MRNA] (ISOFORM 2)</scope>
    <source>
        <tissue>Amygdala</tissue>
    </source>
</reference>
<reference key="5">
    <citation type="journal article" date="2004" name="Nature">
        <title>The DNA sequence and biology of human chromosome 19.</title>
        <authorList>
            <person name="Grimwood J."/>
            <person name="Gordon L.A."/>
            <person name="Olsen A.S."/>
            <person name="Terry A."/>
            <person name="Schmutz J."/>
            <person name="Lamerdin J.E."/>
            <person name="Hellsten U."/>
            <person name="Goodstein D."/>
            <person name="Couronne O."/>
            <person name="Tran-Gyamfi M."/>
            <person name="Aerts A."/>
            <person name="Altherr M."/>
            <person name="Ashworth L."/>
            <person name="Bajorek E."/>
            <person name="Black S."/>
            <person name="Branscomb E."/>
            <person name="Caenepeel S."/>
            <person name="Carrano A.V."/>
            <person name="Caoile C."/>
            <person name="Chan Y.M."/>
            <person name="Christensen M."/>
            <person name="Cleland C.A."/>
            <person name="Copeland A."/>
            <person name="Dalin E."/>
            <person name="Dehal P."/>
            <person name="Denys M."/>
            <person name="Detter J.C."/>
            <person name="Escobar J."/>
            <person name="Flowers D."/>
            <person name="Fotopulos D."/>
            <person name="Garcia C."/>
            <person name="Georgescu A.M."/>
            <person name="Glavina T."/>
            <person name="Gomez M."/>
            <person name="Gonzales E."/>
            <person name="Groza M."/>
            <person name="Hammon N."/>
            <person name="Hawkins T."/>
            <person name="Haydu L."/>
            <person name="Ho I."/>
            <person name="Huang W."/>
            <person name="Israni S."/>
            <person name="Jett J."/>
            <person name="Kadner K."/>
            <person name="Kimball H."/>
            <person name="Kobayashi A."/>
            <person name="Larionov V."/>
            <person name="Leem S.-H."/>
            <person name="Lopez F."/>
            <person name="Lou Y."/>
            <person name="Lowry S."/>
            <person name="Malfatti S."/>
            <person name="Martinez D."/>
            <person name="McCready P.M."/>
            <person name="Medina C."/>
            <person name="Morgan J."/>
            <person name="Nelson K."/>
            <person name="Nolan M."/>
            <person name="Ovcharenko I."/>
            <person name="Pitluck S."/>
            <person name="Pollard M."/>
            <person name="Popkie A.P."/>
            <person name="Predki P."/>
            <person name="Quan G."/>
            <person name="Ramirez L."/>
            <person name="Rash S."/>
            <person name="Retterer J."/>
            <person name="Rodriguez A."/>
            <person name="Rogers S."/>
            <person name="Salamov A."/>
            <person name="Salazar A."/>
            <person name="She X."/>
            <person name="Smith D."/>
            <person name="Slezak T."/>
            <person name="Solovyev V."/>
            <person name="Thayer N."/>
            <person name="Tice H."/>
            <person name="Tsai M."/>
            <person name="Ustaszewska A."/>
            <person name="Vo N."/>
            <person name="Wagner M."/>
            <person name="Wheeler J."/>
            <person name="Wu K."/>
            <person name="Xie G."/>
            <person name="Yang J."/>
            <person name="Dubchak I."/>
            <person name="Furey T.S."/>
            <person name="DeJong P."/>
            <person name="Dickson M."/>
            <person name="Gordon D."/>
            <person name="Eichler E.E."/>
            <person name="Pennacchio L.A."/>
            <person name="Richardson P."/>
            <person name="Stubbs L."/>
            <person name="Rokhsar D.S."/>
            <person name="Myers R.M."/>
            <person name="Rubin E.M."/>
            <person name="Lucas S.M."/>
        </authorList>
    </citation>
    <scope>NUCLEOTIDE SEQUENCE [LARGE SCALE GENOMIC DNA]</scope>
</reference>
<reference key="6">
    <citation type="journal article" date="2004" name="Genome Res.">
        <title>The status, quality, and expansion of the NIH full-length cDNA project: the Mammalian Gene Collection (MGC).</title>
        <authorList>
            <consortium name="The MGC Project Team"/>
        </authorList>
    </citation>
    <scope>NUCLEOTIDE SEQUENCE [LARGE SCALE MRNA] (ISOFORM 1)</scope>
    <source>
        <tissue>Skin</tissue>
    </source>
</reference>
<reference key="7">
    <citation type="journal article" date="1990" name="Genomics">
        <title>Characterization of the 5' end of the gene for human glucose phosphate isomerase (GPI).</title>
        <authorList>
            <person name="Walker J.I.H."/>
            <person name="Faik P."/>
            <person name="Morgan M.J."/>
        </authorList>
    </citation>
    <scope>NUCLEOTIDE SEQUENCE [GENOMIC DNA] OF 1-71</scope>
</reference>
<reference key="8">
    <citation type="submission" date="2004-10" db="UniProtKB">
        <authorList>
            <person name="Bienvenut W.V."/>
        </authorList>
    </citation>
    <scope>PROTEIN SEQUENCE OF 2-12; 58-73; 97-104; 181-226; 424-438 AND 455-461</scope>
    <scope>CLEAVAGE OF INITIATOR METHIONINE</scope>
    <scope>ACETYLATION AT ALA-2</scope>
    <scope>IDENTIFICATION BY MASS SPECTROMETRY</scope>
    <source>
        <tissue>B-cell lymphoma</tissue>
    </source>
</reference>
<reference key="9">
    <citation type="journal article" date="1988" name="Nature">
        <title>Mouse glucose-6-phosphate isomerase and neuroleukin have identical 3' sequences.</title>
        <authorList>
            <person name="Faik P."/>
            <person name="Walker J.I.H."/>
            <person name="Redmill A.A.M."/>
            <person name="Morgan M.J."/>
        </authorList>
    </citation>
    <scope>IDENTITY OF NEUROLEUKIN AS PGI</scope>
</reference>
<reference key="10">
    <citation type="journal article" date="2000" name="Biochim. Biophys. Acta">
        <title>Phosphohexose isomerase/autocrine motility factor/neuroleukin/maturation factor is a multifunctional phosphoprotein.</title>
        <authorList>
            <person name="Haga A."/>
            <person name="Niinaka Y."/>
            <person name="Raz A."/>
        </authorList>
    </citation>
    <scope>FUNCTION</scope>
    <scope>PHOSPHORYLATION AT SER-185</scope>
</reference>
<reference key="11">
    <citation type="journal article" date="2001" name="Biochem. Biophys. Res. Commun.">
        <title>Tumor autocrine motility factor is an angiogenic factor that stimulates endothelial cell motility.</title>
        <authorList>
            <person name="Funasaka T."/>
            <person name="Haga A."/>
            <person name="Raz A."/>
            <person name="Nagase H."/>
        </authorList>
    </citation>
    <scope>SUBCELLULAR LOCATION</scope>
    <scope>FUNCTION</scope>
</reference>
<reference key="12">
    <citation type="journal article" date="2002" name="FEBS Lett.">
        <title>Species specificity of the cytokine function of phosphoglucose isomerase.</title>
        <authorList>
            <person name="Amraei M."/>
            <person name="Nabi I.R."/>
        </authorList>
    </citation>
    <scope>SPECIES SPECIFICITY OF THE CYTOKINE FUNCTION</scope>
</reference>
<reference key="13">
    <citation type="journal article" date="2005" name="Biochem. Biophys. Res. Commun.">
        <title>Proteomic identification of proteins conjugated to ISG15 in mouse and human cells.</title>
        <authorList>
            <person name="Giannakopoulos N.V."/>
            <person name="Luo J.K."/>
            <person name="Papov V."/>
            <person name="Zou W."/>
            <person name="Lenschow D.J."/>
            <person name="Jacobs B.S."/>
            <person name="Borden E.C."/>
            <person name="Li J."/>
            <person name="Virgin H.W."/>
            <person name="Zhang D.E."/>
        </authorList>
    </citation>
    <scope>ISGYLATION</scope>
</reference>
<reference key="14">
    <citation type="journal article" date="2005" name="J. Biol. Chem.">
        <title>Differential regulation of phosphoglucose isomerase/autocrine motility factor activities by protein kinase CK2 phosphorylation.</title>
        <authorList>
            <person name="Yanagawa T."/>
            <person name="Funasaka T."/>
            <person name="Tsutsumi S."/>
            <person name="Raz T."/>
            <person name="Tanaka N."/>
            <person name="Raz A."/>
        </authorList>
    </citation>
    <scope>PHOSPHORYLATION AT SER-185</scope>
    <scope>MUTAGENESIS OF SER-185</scope>
</reference>
<reference key="15">
    <citation type="journal article" date="2008" name="Proc. Natl. Acad. Sci. U.S.A.">
        <title>A quantitative atlas of mitotic phosphorylation.</title>
        <authorList>
            <person name="Dephoure N."/>
            <person name="Zhou C."/>
            <person name="Villen J."/>
            <person name="Beausoleil S.A."/>
            <person name="Bakalarski C.E."/>
            <person name="Elledge S.J."/>
            <person name="Gygi S.P."/>
        </authorList>
    </citation>
    <scope>PHOSPHORYLATION [LARGE SCALE ANALYSIS] AT THR-109</scope>
    <scope>IDENTIFICATION BY MASS SPECTROMETRY [LARGE SCALE ANALYSIS]</scope>
    <source>
        <tissue>Cervix carcinoma</tissue>
    </source>
</reference>
<reference key="16">
    <citation type="journal article" date="2009" name="Anal. Chem.">
        <title>Lys-N and trypsin cover complementary parts of the phosphoproteome in a refined SCX-based approach.</title>
        <authorList>
            <person name="Gauci S."/>
            <person name="Helbig A.O."/>
            <person name="Slijper M."/>
            <person name="Krijgsveld J."/>
            <person name="Heck A.J."/>
            <person name="Mohammed S."/>
        </authorList>
    </citation>
    <scope>ACETYLATION [LARGE SCALE ANALYSIS] AT ALA-2</scope>
    <scope>CLEAVAGE OF INITIATOR METHIONINE [LARGE SCALE ANALYSIS]</scope>
    <scope>IDENTIFICATION BY MASS SPECTROMETRY [LARGE SCALE ANALYSIS]</scope>
</reference>
<reference key="17">
    <citation type="journal article" date="2009" name="Sci. Signal.">
        <title>Quantitative phosphoproteomic analysis of T cell receptor signaling reveals system-wide modulation of protein-protein interactions.</title>
        <authorList>
            <person name="Mayya V."/>
            <person name="Lundgren D.H."/>
            <person name="Hwang S.-I."/>
            <person name="Rezaul K."/>
            <person name="Wu L."/>
            <person name="Eng J.K."/>
            <person name="Rodionov V."/>
            <person name="Han D.K."/>
        </authorList>
    </citation>
    <scope>PHOSPHORYLATION [LARGE SCALE ANALYSIS] AT THR-109</scope>
    <scope>IDENTIFICATION BY MASS SPECTROMETRY [LARGE SCALE ANALYSIS]</scope>
    <source>
        <tissue>Leukemic T-cell</tissue>
    </source>
</reference>
<reference key="18">
    <citation type="journal article" date="2009" name="Science">
        <title>Lysine acetylation targets protein complexes and co-regulates major cellular functions.</title>
        <authorList>
            <person name="Choudhary C."/>
            <person name="Kumar C."/>
            <person name="Gnad F."/>
            <person name="Nielsen M.L."/>
            <person name="Rehman M."/>
            <person name="Walther T.C."/>
            <person name="Olsen J.V."/>
            <person name="Mann M."/>
        </authorList>
    </citation>
    <scope>ACETYLATION [LARGE SCALE ANALYSIS] AT LYS-12 AND LYS-142</scope>
    <scope>IDENTIFICATION BY MASS SPECTROMETRY [LARGE SCALE ANALYSIS]</scope>
</reference>
<reference key="19">
    <citation type="journal article" date="2011" name="BMC Syst. Biol.">
        <title>Initial characterization of the human central proteome.</title>
        <authorList>
            <person name="Burkard T.R."/>
            <person name="Planyavsky M."/>
            <person name="Kaupe I."/>
            <person name="Breitwieser F.P."/>
            <person name="Buerckstuemmer T."/>
            <person name="Bennett K.L."/>
            <person name="Superti-Furga G."/>
            <person name="Colinge J."/>
        </authorList>
    </citation>
    <scope>IDENTIFICATION BY MASS SPECTROMETRY [LARGE SCALE ANALYSIS]</scope>
</reference>
<reference key="20">
    <citation type="journal article" date="2011" name="Mol. Cell. Proteomics">
        <title>The first identification of lysine malonylation substrates and its regulatory enzyme.</title>
        <authorList>
            <person name="Peng C."/>
            <person name="Lu Z."/>
            <person name="Xie Z."/>
            <person name="Cheng Z."/>
            <person name="Chen Y."/>
            <person name="Tan M."/>
            <person name="Luo H."/>
            <person name="Zhang Y."/>
            <person name="He W."/>
            <person name="Yang K."/>
            <person name="Zwaans B.M."/>
            <person name="Tishkoff D."/>
            <person name="Ho L."/>
            <person name="Lombard D."/>
            <person name="He T.C."/>
            <person name="Dai J."/>
            <person name="Verdin E."/>
            <person name="Ye Y."/>
            <person name="Zhao Y."/>
        </authorList>
    </citation>
    <scope>MALONYLATION AT LYS-454</scope>
</reference>
<reference key="21">
    <citation type="journal article" date="2013" name="J. Proteome Res.">
        <title>Toward a comprehensive characterization of a human cancer cell phosphoproteome.</title>
        <authorList>
            <person name="Zhou H."/>
            <person name="Di Palma S."/>
            <person name="Preisinger C."/>
            <person name="Peng M."/>
            <person name="Polat A.N."/>
            <person name="Heck A.J."/>
            <person name="Mohammed S."/>
        </authorList>
    </citation>
    <scope>PHOSPHORYLATION [LARGE SCALE ANALYSIS] AT SER-107; THR-109 AND SER-455</scope>
    <scope>IDENTIFICATION BY MASS SPECTROMETRY [LARGE SCALE ANALYSIS]</scope>
    <source>
        <tissue>Cervix carcinoma</tissue>
        <tissue>Erythroleukemia</tissue>
    </source>
</reference>
<reference key="22">
    <citation type="journal article" date="2014" name="J. Proteomics">
        <title>An enzyme assisted RP-RPLC approach for in-depth analysis of human liver phosphoproteome.</title>
        <authorList>
            <person name="Bian Y."/>
            <person name="Song C."/>
            <person name="Cheng K."/>
            <person name="Dong M."/>
            <person name="Wang F."/>
            <person name="Huang J."/>
            <person name="Sun D."/>
            <person name="Wang L."/>
            <person name="Ye M."/>
            <person name="Zou H."/>
        </authorList>
    </citation>
    <scope>PHOSPHORYLATION [LARGE SCALE ANALYSIS] AT THR-109</scope>
    <scope>IDENTIFICATION BY MASS SPECTROMETRY [LARGE SCALE ANALYSIS]</scope>
    <source>
        <tissue>Liver</tissue>
    </source>
</reference>
<reference key="23">
    <citation type="journal article" date="2015" name="Proteomics">
        <title>N-terminome analysis of the human mitochondrial proteome.</title>
        <authorList>
            <person name="Vaca Jacome A.S."/>
            <person name="Rabilloud T."/>
            <person name="Schaeffer-Reiss C."/>
            <person name="Rompais M."/>
            <person name="Ayoub D."/>
            <person name="Lane L."/>
            <person name="Bairoch A."/>
            <person name="Van Dorsselaer A."/>
            <person name="Carapito C."/>
        </authorList>
    </citation>
    <scope>IDENTIFICATION BY MASS SPECTROMETRY [LARGE SCALE ANALYSIS]</scope>
</reference>
<reference key="24">
    <citation type="journal article" date="2018" name="Mol. Cell">
        <title>p300-mediated lysine 2-hydroxyisobutyrylation regulates glycolysis.</title>
        <authorList>
            <person name="Huang H."/>
            <person name="Tang S."/>
            <person name="Ji M."/>
            <person name="Tang Z."/>
            <person name="Shimada M."/>
            <person name="Liu X."/>
            <person name="Qi S."/>
            <person name="Locasale J.W."/>
            <person name="Roeder R.G."/>
            <person name="Zhao Y."/>
            <person name="Li X."/>
        </authorList>
    </citation>
    <scope>HYDROXYBUTYRYLATION AT LYS-34</scope>
</reference>
<reference key="25">
    <citation type="journal article" date="2001" name="J. Mol. Biol.">
        <title>The crystal structure of human phosphoglucose isomerase at 1.6 A resolution: implications for catalytic mechanism, cytokine activity and haemolytic anaemia.</title>
        <authorList>
            <person name="Read J."/>
            <person name="Pearce J."/>
            <person name="Li X."/>
            <person name="Muirhead H."/>
            <person name="Chirgwin J."/>
            <person name="Davies C."/>
        </authorList>
    </citation>
    <scope>X-RAY CRYSTALLOGRAPHY (1.62 ANGSTROMS)</scope>
    <scope>SUBUNIT</scope>
    <scope>ACTIVE SITE</scope>
</reference>
<reference key="26">
    <citation type="journal article" date="2002" name="J. Mol. Biol.">
        <title>Inhibition mechanism of cytokine activity of human autocrine motility factor examined by crystal structure analyses and site-directed mutagenesis studies.</title>
        <authorList>
            <person name="Tanaka N."/>
            <person name="Haga A."/>
            <person name="Uemura H."/>
            <person name="Akiyama H."/>
            <person name="Funasaka T."/>
            <person name="Nagase H."/>
            <person name="Raz A."/>
            <person name="Nakamura K.T."/>
        </authorList>
    </citation>
    <scope>X-RAY CRYSTALLOGRAPHY (1.9 ANGSTROMS) ALONE AND IN COMPLEX WITH INHIBITOR</scope>
</reference>
<reference key="27">
    <citation type="journal article" date="2003" name="Acta Crystallogr. D">
        <title>The structure of human phosphoglucose isomerase complexed with a transition-state analogue.</title>
        <authorList>
            <person name="Davies C."/>
            <person name="Muirhead H."/>
            <person name="Chirgwin J."/>
        </authorList>
    </citation>
    <scope>X-RAY CRYSTALLOGRAPHY (2.51 ANGSTROMS) IN COMPLEX WITH INHIBITOR</scope>
    <scope>ACTIVE SITE</scope>
</reference>
<reference key="28">
    <citation type="journal article" date="2003" name="Biochim. Biophys. Acta">
        <title>Crystal structure of human phosphoglucose isomerase and analysis of the initial catalytic steps.</title>
        <authorList>
            <person name="Cordeiro A.T."/>
            <person name="Godoi P.H."/>
            <person name="Silva C.H."/>
            <person name="Garratt R.C."/>
            <person name="Oliva G."/>
            <person name="Thiemann O.H."/>
        </authorList>
    </citation>
    <scope>X-RAY CRYSTALLOGRAPHY (2.1 ANGSTROMS)</scope>
    <scope>ACTIVE SITE</scope>
</reference>
<reference key="29">
    <citation type="journal article" date="1993" name="Hum. Mol. Genet.">
        <title>DNA sequence abnormalities in human glucose 6-phosphate isomerase deficiency.</title>
        <authorList>
            <person name="Walker J.I.H."/>
            <person name="Layton D.M."/>
            <person name="Bellingham A.J."/>
            <person name="Morgan M.J."/>
            <person name="Faik P."/>
        </authorList>
    </citation>
    <scope>VARIANTS CNSHA4 SER-159; HIS-347 AND THR-525</scope>
</reference>
<reference key="30">
    <citation type="journal article" date="1994" name="J. Clin. Invest.">
        <title>The characterization of gene mutations for human glucose phosphate isomerase deficiency associated with chronic hemolytic anemia.</title>
        <authorList>
            <person name="Xu W."/>
            <person name="Beutler E."/>
        </authorList>
    </citation>
    <scope>VARIANTS CNSHA4 TRP-83; MET-224; HIS-273; LEU-278; CYS-347; PHE-487 AND LYS-495</scope>
</reference>
<reference key="31">
    <citation type="journal article" date="1996" name="Blood">
        <title>Study of the molecular defects in glucose phosphate isomerase-deficient patients affected by chronic hemolytic anemia.</title>
        <authorList>
            <person name="Baronciani L."/>
            <person name="Zanella A."/>
            <person name="Bianchi P."/>
            <person name="Zappa M."/>
            <person name="Alfinito F."/>
            <person name="Iolascon A."/>
            <person name="Tannoia N."/>
            <person name="Beutler E."/>
            <person name="Sirchia G."/>
        </authorList>
    </citation>
    <scope>VARIANTS CNSHA4 MET-101; ILE-195; ARG-343 AND THR-525</scope>
</reference>
<reference key="32">
    <citation type="journal article" date="1996" name="Blood">
        <title>Molecular analysis of glucose phosphate isomerase deficiency associated with hereditary hemolytic anemia.</title>
        <authorList>
            <person name="Kanno H."/>
            <person name="Fujii H."/>
            <person name="Hirono A."/>
            <person name="Ishida Y."/>
            <person name="Ohga S."/>
            <person name="Fukumoto Y."/>
            <person name="Matsuzawa K."/>
            <person name="Ogawa S."/>
            <person name="Miwa S."/>
        </authorList>
    </citation>
    <scope>VARIANTS CNSHA4 ILE-5; MET-224; ARG-343; ARG-375 AND ASN-539</scope>
</reference>
<reference key="33">
    <citation type="journal article" date="1997" name="Blood Cells Mol. Dis.">
        <title>Glucosephosphate isomerase (GPI) deficiency mutations associated with hereditary nonspherocytic hemolytic anemia (HNSHA).</title>
        <authorList>
            <person name="Beutler E."/>
            <person name="West C."/>
            <person name="Britton H.A."/>
            <person name="Harris J."/>
            <person name="Forman L."/>
        </authorList>
    </citation>
    <scope>VARIANTS CNSHA4 GLY-75; PRO-300; CYS-347 AND HIS-472</scope>
</reference>
<reference key="34">
    <citation type="journal article" date="1998" name="Hum. Genet.">
        <title>Molecular basis of neurological dysfunction coupled with haemolytic anaemia in human glucose-6-phosphate isomerase (GPI) deficiency.</title>
        <authorList>
            <person name="Kugler W."/>
            <person name="Breme K."/>
            <person name="Laspe P."/>
            <person name="Muirhead H."/>
            <person name="Davies C."/>
            <person name="Winkler H."/>
            <person name="Schroter W."/>
            <person name="Lakomek M."/>
        </authorList>
    </citation>
    <scope>VARIANTS CNSHA4 PRO-20; PRO-339; ARG-389 AND VAL-517</scope>
</reference>
<reference key="35">
    <citation type="journal article" date="2018" name="Blood Cells Mol. Dis.">
        <title>Two novel mutations (p.(Ser160Pro) and p.(Arg472Cys)) causing glucose-6-phosphate isomerase deficiency are associated with erythroid dysplasia and inappropriately suppressed hepcidin.</title>
        <authorList>
            <person name="Mojzikova R."/>
            <person name="Koralkova P."/>
            <person name="Holub D."/>
            <person name="Saxova Z."/>
            <person name="Pospisilova D."/>
            <person name="Prochazkova D."/>
            <person name="Dzubak P."/>
            <person name="Horvathova M."/>
            <person name="Divoky V."/>
        </authorList>
    </citation>
    <scope>VARIANTS CNSHA4 PRO-160 AND CYS-472</scope>
    <scope>FUNCTION</scope>
    <scope>CATALYTIC ACTIVITY</scope>
    <scope>PATHWAY</scope>
</reference>
<accession>P06744</accession>
<accession>B4DG39</accession>
<accession>Q9BRD3</accession>
<accession>Q9BSK5</accession>
<accession>Q9UHE6</accession>
<protein>
    <recommendedName>
        <fullName evidence="27">Glucose-6-phosphate isomerase</fullName>
        <shortName evidence="27">GPI</shortName>
        <ecNumber evidence="12">5.3.1.9</ecNumber>
    </recommendedName>
    <alternativeName>
        <fullName evidence="24">Autocrine motility factor</fullName>
        <shortName evidence="24">AMF</shortName>
    </alternativeName>
    <alternativeName>
        <fullName evidence="28">Neuroleukin</fullName>
        <shortName evidence="28">NLK</shortName>
    </alternativeName>
    <alternativeName>
        <fullName evidence="25">Phosphoglucose isomerase</fullName>
        <shortName evidence="25">PGI</shortName>
    </alternativeName>
    <alternativeName>
        <fullName evidence="24">Phosphohexose isomerase</fullName>
        <shortName evidence="24">PHI</shortName>
    </alternativeName>
    <alternativeName>
        <fullName evidence="23">Sperm antigen 36</fullName>
        <shortName evidence="23">SA-36</shortName>
    </alternativeName>
</protein>
<name>G6PI_HUMAN</name>